<accession>A1RVP5</accession>
<comment type="function">
    <text evidence="1">Involved in protein export. The function of the beta subunit is unknown, but it may be involved in stabilization of the trimeric complex.</text>
</comment>
<comment type="subunit">
    <text evidence="1">Component of the protein translocase complex. Heterotrimer consisting of alpha (SecY), beta (SecG) and gamma (SecE) subunits. Can form oligomers of the heterotrimer.</text>
</comment>
<comment type="subcellular location">
    <subcellularLocation>
        <location evidence="1">Cell membrane</location>
        <topology evidence="1">Single-pass membrane protein</topology>
    </subcellularLocation>
</comment>
<comment type="similarity">
    <text evidence="1">Belongs to the SEC61-beta family.</text>
</comment>
<evidence type="ECO:0000255" key="1">
    <source>
        <dbReference type="HAMAP-Rule" id="MF_00751"/>
    </source>
</evidence>
<gene>
    <name evidence="1" type="primary">secG</name>
    <name type="ordered locus">Pisl_1880</name>
</gene>
<organism>
    <name type="scientific">Pyrobaculum islandicum (strain DSM 4184 / JCM 9189 / GEO3)</name>
    <dbReference type="NCBI Taxonomy" id="384616"/>
    <lineage>
        <taxon>Archaea</taxon>
        <taxon>Thermoproteota</taxon>
        <taxon>Thermoprotei</taxon>
        <taxon>Thermoproteales</taxon>
        <taxon>Thermoproteaceae</taxon>
        <taxon>Pyrobaculum</taxon>
    </lineage>
</organism>
<sequence length="57" mass="6412">MARRRKYEGLNPFVAAGLIKFSEEGELERIKLNPRTAILVSITVIIAILVLNILHPL</sequence>
<reference key="1">
    <citation type="submission" date="2006-12" db="EMBL/GenBank/DDBJ databases">
        <title>Complete sequence of Pyrobaculum islandicum DSM 4184.</title>
        <authorList>
            <person name="Copeland A."/>
            <person name="Lucas S."/>
            <person name="Lapidus A."/>
            <person name="Barry K."/>
            <person name="Detter J.C."/>
            <person name="Glavina del Rio T."/>
            <person name="Dalin E."/>
            <person name="Tice H."/>
            <person name="Pitluck S."/>
            <person name="Meincke L."/>
            <person name="Brettin T."/>
            <person name="Bruce D."/>
            <person name="Han C."/>
            <person name="Tapia R."/>
            <person name="Gilna P."/>
            <person name="Schmutz J."/>
            <person name="Larimer F."/>
            <person name="Land M."/>
            <person name="Hauser L."/>
            <person name="Kyrpides N."/>
            <person name="Mikhailova N."/>
            <person name="Cozen A.E."/>
            <person name="Fitz-Gibbon S.T."/>
            <person name="House C.H."/>
            <person name="Saltikov C."/>
            <person name="Lowe T."/>
            <person name="Richardson P."/>
        </authorList>
    </citation>
    <scope>NUCLEOTIDE SEQUENCE [LARGE SCALE GENOMIC DNA]</scope>
    <source>
        <strain>DSM 4184 / JCM 9189 / GEO3</strain>
    </source>
</reference>
<dbReference type="EMBL" id="CP000504">
    <property type="protein sequence ID" value="ABL89027.1"/>
    <property type="molecule type" value="Genomic_DNA"/>
</dbReference>
<dbReference type="RefSeq" id="WP_011763602.1">
    <property type="nucleotide sequence ID" value="NC_008701.1"/>
</dbReference>
<dbReference type="SMR" id="A1RVP5"/>
<dbReference type="GeneID" id="4616526"/>
<dbReference type="KEGG" id="pis:Pisl_1880"/>
<dbReference type="eggNOG" id="arCOG02957">
    <property type="taxonomic scope" value="Archaea"/>
</dbReference>
<dbReference type="HOGENOM" id="CLU_208205_2_1_2"/>
<dbReference type="OrthoDB" id="28749at2157"/>
<dbReference type="Proteomes" id="UP000002595">
    <property type="component" value="Chromosome"/>
</dbReference>
<dbReference type="GO" id="GO:0005886">
    <property type="term" value="C:plasma membrane"/>
    <property type="evidence" value="ECO:0007669"/>
    <property type="project" value="UniProtKB-SubCell"/>
</dbReference>
<dbReference type="GO" id="GO:0015031">
    <property type="term" value="P:protein transport"/>
    <property type="evidence" value="ECO:0007669"/>
    <property type="project" value="UniProtKB-UniRule"/>
</dbReference>
<dbReference type="HAMAP" id="MF_00751">
    <property type="entry name" value="SecG"/>
    <property type="match status" value="1"/>
</dbReference>
<dbReference type="InterPro" id="IPR023531">
    <property type="entry name" value="Preprot_translocase_SecG"/>
</dbReference>
<dbReference type="InterPro" id="IPR016482">
    <property type="entry name" value="SecG/Sec61-beta/Sbh"/>
</dbReference>
<dbReference type="NCBIfam" id="NF002318">
    <property type="entry name" value="PRK01253.1"/>
    <property type="match status" value="1"/>
</dbReference>
<dbReference type="Pfam" id="PF03911">
    <property type="entry name" value="Sec61_beta"/>
    <property type="match status" value="1"/>
</dbReference>
<proteinExistence type="inferred from homology"/>
<feature type="chain" id="PRO_1000046582" description="Preprotein translocase subunit SecG">
    <location>
        <begin position="1"/>
        <end position="57"/>
    </location>
</feature>
<feature type="topological domain" description="Cytoplasmic" evidence="1">
    <location>
        <begin position="1"/>
        <end position="33"/>
    </location>
</feature>
<feature type="transmembrane region" description="Helical" evidence="1">
    <location>
        <begin position="34"/>
        <end position="55"/>
    </location>
</feature>
<feature type="topological domain" description="Extracellular" evidence="1">
    <location>
        <begin position="56"/>
        <end position="57"/>
    </location>
</feature>
<keyword id="KW-1003">Cell membrane</keyword>
<keyword id="KW-0472">Membrane</keyword>
<keyword id="KW-0653">Protein transport</keyword>
<keyword id="KW-0811">Translocation</keyword>
<keyword id="KW-0812">Transmembrane</keyword>
<keyword id="KW-1133">Transmembrane helix</keyword>
<keyword id="KW-0813">Transport</keyword>
<protein>
    <recommendedName>
        <fullName evidence="1">Preprotein translocase subunit SecG</fullName>
    </recommendedName>
    <alternativeName>
        <fullName evidence="1">Protein transport protein Sec61 subunit beta homolog</fullName>
    </alternativeName>
</protein>
<name>SECG_PYRIL</name>